<accession>Q12161</accession>
<accession>D6W213</accession>
<sequence>MGDELHNRLLHQNDGTKDAILYKIIESLVCSICHDYMFVPMMTPCGHNYCYGCLNTWFASNTQKELACPQCRSDITTIPALNTTLQQYLSFILEKLRDQNDESFKKLLTTKTKEENDYKNDKEKDTLFDKVFKNSALAVADDSDDGITRCSNCHWELDPDEVEDGNVCPHCNARIRNYAGGRDEFDEEEYSEGELDEIRESMRRRRENRFASTNPFANRDDVSSEDDDSSEEEPMREHIPLGRWARSHNRSIAVDAVDDEDDEEEDEEEEEEMDSDLKDFIEDDEDDEDEDGSRRNLVLSALKNRHVIITDDEEEEQRRHATEEEDRDSDFYEHNDDGFVSGDSLDEDQKEVTRIQSSSDSEDRSLSYSGSSDVKDNNDDNTEELDDPQPKRQKRFRVVLGDSDDE</sequence>
<comment type="subunit">
    <text evidence="3">Interacts with POB3 and SPT16.</text>
</comment>
<comment type="subcellular location">
    <subcellularLocation>
        <location evidence="4">Nucleus</location>
    </subcellularLocation>
</comment>
<comment type="miscellaneous">
    <text evidence="5">Present with 6490 molecules/cell in log phase SD medium.</text>
</comment>
<name>PSH1_YEAST</name>
<keyword id="KW-0479">Metal-binding</keyword>
<keyword id="KW-0539">Nucleus</keyword>
<keyword id="KW-0597">Phosphoprotein</keyword>
<keyword id="KW-1185">Reference proteome</keyword>
<keyword id="KW-0862">Zinc</keyword>
<keyword id="KW-0863">Zinc-finger</keyword>
<feature type="chain" id="PRO_0000235918" description="RING finger protein PSH1">
    <location>
        <begin position="1"/>
        <end position="406"/>
    </location>
</feature>
<feature type="zinc finger region" description="RING-type" evidence="1">
    <location>
        <begin position="30"/>
        <end position="72"/>
    </location>
</feature>
<feature type="region of interest" description="Disordered" evidence="2">
    <location>
        <begin position="209"/>
        <end position="406"/>
    </location>
</feature>
<feature type="compositionally biased region" description="Acidic residues" evidence="2">
    <location>
        <begin position="223"/>
        <end position="232"/>
    </location>
</feature>
<feature type="compositionally biased region" description="Acidic residues" evidence="2">
    <location>
        <begin position="256"/>
        <end position="274"/>
    </location>
</feature>
<feature type="compositionally biased region" description="Acidic residues" evidence="2">
    <location>
        <begin position="281"/>
        <end position="291"/>
    </location>
</feature>
<feature type="modified residue" description="Phosphoserine" evidence="6 7 8">
    <location>
        <position position="143"/>
    </location>
</feature>
<feature type="modified residue" description="Phosphoserine" evidence="8">
    <location>
        <position position="191"/>
    </location>
</feature>
<feature type="modified residue" description="Phosphothreonine" evidence="6 7 8">
    <location>
        <position position="310"/>
    </location>
</feature>
<feature type="modified residue" description="Phosphoserine" evidence="6 8">
    <location>
        <position position="403"/>
    </location>
</feature>
<evidence type="ECO:0000255" key="1">
    <source>
        <dbReference type="PROSITE-ProRule" id="PRU00175"/>
    </source>
</evidence>
<evidence type="ECO:0000256" key="2">
    <source>
        <dbReference type="SAM" id="MobiDB-lite"/>
    </source>
</evidence>
<evidence type="ECO:0000269" key="3">
    <source>
    </source>
</evidence>
<evidence type="ECO:0000269" key="4">
    <source>
    </source>
</evidence>
<evidence type="ECO:0000269" key="5">
    <source>
    </source>
</evidence>
<evidence type="ECO:0007744" key="6">
    <source>
    </source>
</evidence>
<evidence type="ECO:0007744" key="7">
    <source>
    </source>
</evidence>
<evidence type="ECO:0007744" key="8">
    <source>
    </source>
</evidence>
<organism>
    <name type="scientific">Saccharomyces cerevisiae (strain ATCC 204508 / S288c)</name>
    <name type="common">Baker's yeast</name>
    <dbReference type="NCBI Taxonomy" id="559292"/>
    <lineage>
        <taxon>Eukaryota</taxon>
        <taxon>Fungi</taxon>
        <taxon>Dikarya</taxon>
        <taxon>Ascomycota</taxon>
        <taxon>Saccharomycotina</taxon>
        <taxon>Saccharomycetes</taxon>
        <taxon>Saccharomycetales</taxon>
        <taxon>Saccharomycetaceae</taxon>
        <taxon>Saccharomyces</taxon>
    </lineage>
</organism>
<gene>
    <name type="primary">PSH1</name>
    <name type="ordered locus">YOL054W</name>
    <name type="ORF">O1263</name>
</gene>
<protein>
    <recommendedName>
        <fullName>RING finger protein PSH1</fullName>
    </recommendedName>
    <alternativeName>
        <fullName>POB3/SPT16 histone-associated protein 1</fullName>
    </alternativeName>
</protein>
<reference key="1">
    <citation type="journal article" date="1996" name="Yeast">
        <title>Analysis of a 26 kb region on the left arm of yeast chromosome XV.</title>
        <authorList>
            <person name="Mannhaupt G."/>
            <person name="Vetter I."/>
            <person name="Schwarzlose C."/>
            <person name="Mitzel S."/>
            <person name="Feldmann H."/>
        </authorList>
    </citation>
    <scope>NUCLEOTIDE SEQUENCE [GENOMIC DNA]</scope>
    <source>
        <strain>ATCC 96604 / S288c / FY1679</strain>
    </source>
</reference>
<reference key="2">
    <citation type="journal article" date="1997" name="Nature">
        <title>The nucleotide sequence of Saccharomyces cerevisiae chromosome XV.</title>
        <authorList>
            <person name="Dujon B."/>
            <person name="Albermann K."/>
            <person name="Aldea M."/>
            <person name="Alexandraki D."/>
            <person name="Ansorge W."/>
            <person name="Arino J."/>
            <person name="Benes V."/>
            <person name="Bohn C."/>
            <person name="Bolotin-Fukuhara M."/>
            <person name="Bordonne R."/>
            <person name="Boyer J."/>
            <person name="Camasses A."/>
            <person name="Casamayor A."/>
            <person name="Casas C."/>
            <person name="Cheret G."/>
            <person name="Cziepluch C."/>
            <person name="Daignan-Fornier B."/>
            <person name="Dang V.-D."/>
            <person name="de Haan M."/>
            <person name="Delius H."/>
            <person name="Durand P."/>
            <person name="Fairhead C."/>
            <person name="Feldmann H."/>
            <person name="Gaillon L."/>
            <person name="Galisson F."/>
            <person name="Gamo F.-J."/>
            <person name="Gancedo C."/>
            <person name="Goffeau A."/>
            <person name="Goulding S.E."/>
            <person name="Grivell L.A."/>
            <person name="Habbig B."/>
            <person name="Hand N.J."/>
            <person name="Hani J."/>
            <person name="Hattenhorst U."/>
            <person name="Hebling U."/>
            <person name="Hernando Y."/>
            <person name="Herrero E."/>
            <person name="Heumann K."/>
            <person name="Hiesel R."/>
            <person name="Hilger F."/>
            <person name="Hofmann B."/>
            <person name="Hollenberg C.P."/>
            <person name="Hughes B."/>
            <person name="Jauniaux J.-C."/>
            <person name="Kalogeropoulos A."/>
            <person name="Katsoulou C."/>
            <person name="Kordes E."/>
            <person name="Lafuente M.J."/>
            <person name="Landt O."/>
            <person name="Louis E.J."/>
            <person name="Maarse A.C."/>
            <person name="Madania A."/>
            <person name="Mannhaupt G."/>
            <person name="Marck C."/>
            <person name="Martin R.P."/>
            <person name="Mewes H.-W."/>
            <person name="Michaux G."/>
            <person name="Paces V."/>
            <person name="Parle-McDermott A.G."/>
            <person name="Pearson B.M."/>
            <person name="Perrin A."/>
            <person name="Pettersson B."/>
            <person name="Poch O."/>
            <person name="Pohl T.M."/>
            <person name="Poirey R."/>
            <person name="Portetelle D."/>
            <person name="Pujol A."/>
            <person name="Purnelle B."/>
            <person name="Ramezani Rad M."/>
            <person name="Rechmann S."/>
            <person name="Schwager C."/>
            <person name="Schweizer M."/>
            <person name="Sor F."/>
            <person name="Sterky F."/>
            <person name="Tarassov I.A."/>
            <person name="Teodoru C."/>
            <person name="Tettelin H."/>
            <person name="Thierry A."/>
            <person name="Tobiasch E."/>
            <person name="Tzermia M."/>
            <person name="Uhlen M."/>
            <person name="Unseld M."/>
            <person name="Valens M."/>
            <person name="Vandenbol M."/>
            <person name="Vetter I."/>
            <person name="Vlcek C."/>
            <person name="Voet M."/>
            <person name="Volckaert G."/>
            <person name="Voss H."/>
            <person name="Wambutt R."/>
            <person name="Wedler H."/>
            <person name="Wiemann S."/>
            <person name="Winsor B."/>
            <person name="Wolfe K.H."/>
            <person name="Zollner A."/>
            <person name="Zumstein E."/>
            <person name="Kleine K."/>
        </authorList>
    </citation>
    <scope>NUCLEOTIDE SEQUENCE [LARGE SCALE GENOMIC DNA]</scope>
    <source>
        <strain>ATCC 204508 / S288c</strain>
    </source>
</reference>
<reference key="3">
    <citation type="journal article" date="2014" name="G3 (Bethesda)">
        <title>The reference genome sequence of Saccharomyces cerevisiae: Then and now.</title>
        <authorList>
            <person name="Engel S.R."/>
            <person name="Dietrich F.S."/>
            <person name="Fisk D.G."/>
            <person name="Binkley G."/>
            <person name="Balakrishnan R."/>
            <person name="Costanzo M.C."/>
            <person name="Dwight S.S."/>
            <person name="Hitz B.C."/>
            <person name="Karra K."/>
            <person name="Nash R.S."/>
            <person name="Weng S."/>
            <person name="Wong E.D."/>
            <person name="Lloyd P."/>
            <person name="Skrzypek M.S."/>
            <person name="Miyasato S.R."/>
            <person name="Simison M."/>
            <person name="Cherry J.M."/>
        </authorList>
    </citation>
    <scope>GENOME REANNOTATION</scope>
    <source>
        <strain>ATCC 204508 / S288c</strain>
    </source>
</reference>
<reference key="4">
    <citation type="journal article" date="2002" name="Mol. Cell. Biol.">
        <title>RNA polymerase II elongation factors of Saccharomyces cerevisiae: a targeted proteomics approach.</title>
        <authorList>
            <person name="Krogan N.J."/>
            <person name="Kim M."/>
            <person name="Ahn S.H."/>
            <person name="Zhong G."/>
            <person name="Kobor M.S."/>
            <person name="Cagney G."/>
            <person name="Emili A."/>
            <person name="Shilatifard A."/>
            <person name="Buratowski S."/>
            <person name="Greenblatt J.F."/>
        </authorList>
    </citation>
    <scope>INTERACTION WITH POB3 AND SPT16</scope>
    <scope>IDENTIFICATION BY MASS SPECTROMETRY</scope>
</reference>
<reference key="5">
    <citation type="journal article" date="2003" name="Nature">
        <title>Global analysis of protein localization in budding yeast.</title>
        <authorList>
            <person name="Huh W.-K."/>
            <person name="Falvo J.V."/>
            <person name="Gerke L.C."/>
            <person name="Carroll A.S."/>
            <person name="Howson R.W."/>
            <person name="Weissman J.S."/>
            <person name="O'Shea E.K."/>
        </authorList>
    </citation>
    <scope>SUBCELLULAR LOCATION [LARGE SCALE ANALYSIS]</scope>
</reference>
<reference key="6">
    <citation type="journal article" date="2003" name="Nature">
        <title>Global analysis of protein expression in yeast.</title>
        <authorList>
            <person name="Ghaemmaghami S."/>
            <person name="Huh W.-K."/>
            <person name="Bower K."/>
            <person name="Howson R.W."/>
            <person name="Belle A."/>
            <person name="Dephoure N."/>
            <person name="O'Shea E.K."/>
            <person name="Weissman J.S."/>
        </authorList>
    </citation>
    <scope>LEVEL OF PROTEIN EXPRESSION [LARGE SCALE ANALYSIS]</scope>
</reference>
<reference key="7">
    <citation type="journal article" date="2007" name="J. Proteome Res.">
        <title>Large-scale phosphorylation analysis of alpha-factor-arrested Saccharomyces cerevisiae.</title>
        <authorList>
            <person name="Li X."/>
            <person name="Gerber S.A."/>
            <person name="Rudner A.D."/>
            <person name="Beausoleil S.A."/>
            <person name="Haas W."/>
            <person name="Villen J."/>
            <person name="Elias J.E."/>
            <person name="Gygi S.P."/>
        </authorList>
    </citation>
    <scope>PHOSPHORYLATION [LARGE SCALE ANALYSIS] AT SER-143; THR-310 AND SER-403</scope>
    <scope>IDENTIFICATION BY MASS SPECTROMETRY [LARGE SCALE ANALYSIS]</scope>
    <source>
        <strain>ADR376</strain>
    </source>
</reference>
<reference key="8">
    <citation type="journal article" date="2008" name="Mol. Cell. Proteomics">
        <title>A multidimensional chromatography technology for in-depth phosphoproteome analysis.</title>
        <authorList>
            <person name="Albuquerque C.P."/>
            <person name="Smolka M.B."/>
            <person name="Payne S.H."/>
            <person name="Bafna V."/>
            <person name="Eng J."/>
            <person name="Zhou H."/>
        </authorList>
    </citation>
    <scope>PHOSPHORYLATION [LARGE SCALE ANALYSIS] AT SER-143 AND THR-310</scope>
    <scope>IDENTIFICATION BY MASS SPECTROMETRY [LARGE SCALE ANALYSIS]</scope>
</reference>
<reference key="9">
    <citation type="journal article" date="2009" name="Science">
        <title>Global analysis of Cdk1 substrate phosphorylation sites provides insights into evolution.</title>
        <authorList>
            <person name="Holt L.J."/>
            <person name="Tuch B.B."/>
            <person name="Villen J."/>
            <person name="Johnson A.D."/>
            <person name="Gygi S.P."/>
            <person name="Morgan D.O."/>
        </authorList>
    </citation>
    <scope>PHOSPHORYLATION [LARGE SCALE ANALYSIS] AT SER-143; SER-191; THR-310 AND SER-403</scope>
    <scope>IDENTIFICATION BY MASS SPECTROMETRY [LARGE SCALE ANALYSIS]</scope>
</reference>
<reference key="10">
    <citation type="journal article" date="2012" name="Proc. Natl. Acad. Sci. U.S.A.">
        <title>N-terminal acetylome analyses and functional insights of the N-terminal acetyltransferase NatB.</title>
        <authorList>
            <person name="Van Damme P."/>
            <person name="Lasa M."/>
            <person name="Polevoda B."/>
            <person name="Gazquez C."/>
            <person name="Elosegui-Artola A."/>
            <person name="Kim D.S."/>
            <person name="De Juan-Pardo E."/>
            <person name="Demeyer K."/>
            <person name="Hole K."/>
            <person name="Larrea E."/>
            <person name="Timmerman E."/>
            <person name="Prieto J."/>
            <person name="Arnesen T."/>
            <person name="Sherman F."/>
            <person name="Gevaert K."/>
            <person name="Aldabe R."/>
        </authorList>
    </citation>
    <scope>IDENTIFICATION BY MASS SPECTROMETRY [LARGE SCALE ANALYSIS]</scope>
</reference>
<dbReference type="EMBL" id="X91067">
    <property type="protein sequence ID" value="CAA62533.1"/>
    <property type="molecule type" value="Genomic_DNA"/>
</dbReference>
<dbReference type="EMBL" id="Z74796">
    <property type="protein sequence ID" value="CAA99062.1"/>
    <property type="molecule type" value="Genomic_DNA"/>
</dbReference>
<dbReference type="EMBL" id="BK006948">
    <property type="protein sequence ID" value="DAA10729.1"/>
    <property type="molecule type" value="Genomic_DNA"/>
</dbReference>
<dbReference type="PIR" id="S59296">
    <property type="entry name" value="S59296"/>
</dbReference>
<dbReference type="RefSeq" id="NP_014587.1">
    <property type="nucleotide sequence ID" value="NM_001183309.1"/>
</dbReference>
<dbReference type="SMR" id="Q12161"/>
<dbReference type="BioGRID" id="34349">
    <property type="interactions" value="197"/>
</dbReference>
<dbReference type="DIP" id="DIP-6481N"/>
<dbReference type="FunCoup" id="Q12161">
    <property type="interactions" value="378"/>
</dbReference>
<dbReference type="IntAct" id="Q12161">
    <property type="interactions" value="32"/>
</dbReference>
<dbReference type="MINT" id="Q12161"/>
<dbReference type="STRING" id="4932.YOL054W"/>
<dbReference type="iPTMnet" id="Q12161"/>
<dbReference type="PaxDb" id="4932-YOL054W"/>
<dbReference type="PeptideAtlas" id="Q12161"/>
<dbReference type="EnsemblFungi" id="YOL054W_mRNA">
    <property type="protein sequence ID" value="YOL054W"/>
    <property type="gene ID" value="YOL054W"/>
</dbReference>
<dbReference type="GeneID" id="854102"/>
<dbReference type="KEGG" id="sce:YOL054W"/>
<dbReference type="AGR" id="SGD:S000005415"/>
<dbReference type="SGD" id="S000005415">
    <property type="gene designation" value="PSH1"/>
</dbReference>
<dbReference type="VEuPathDB" id="FungiDB:YOL054W"/>
<dbReference type="eggNOG" id="KOG2177">
    <property type="taxonomic scope" value="Eukaryota"/>
</dbReference>
<dbReference type="HOGENOM" id="CLU_037664_0_0_1"/>
<dbReference type="InParanoid" id="Q12161"/>
<dbReference type="OMA" id="NSEMTDY"/>
<dbReference type="OrthoDB" id="6105938at2759"/>
<dbReference type="BioCyc" id="YEAST:G3O-33465-MONOMER"/>
<dbReference type="BioGRID-ORCS" id="854102">
    <property type="hits" value="0 hits in 10 CRISPR screens"/>
</dbReference>
<dbReference type="PRO" id="PR:Q12161"/>
<dbReference type="Proteomes" id="UP000002311">
    <property type="component" value="Chromosome XV"/>
</dbReference>
<dbReference type="RNAct" id="Q12161">
    <property type="molecule type" value="protein"/>
</dbReference>
<dbReference type="GO" id="GO:0000775">
    <property type="term" value="C:chromosome, centromeric region"/>
    <property type="evidence" value="ECO:0000314"/>
    <property type="project" value="SGD"/>
</dbReference>
<dbReference type="GO" id="GO:0005634">
    <property type="term" value="C:nucleus"/>
    <property type="evidence" value="ECO:0007005"/>
    <property type="project" value="SGD"/>
</dbReference>
<dbReference type="GO" id="GO:0061630">
    <property type="term" value="F:ubiquitin protein ligase activity"/>
    <property type="evidence" value="ECO:0000318"/>
    <property type="project" value="GO_Central"/>
</dbReference>
<dbReference type="GO" id="GO:0004842">
    <property type="term" value="F:ubiquitin-protein transferase activity"/>
    <property type="evidence" value="ECO:0000314"/>
    <property type="project" value="SGD"/>
</dbReference>
<dbReference type="GO" id="GO:0008270">
    <property type="term" value="F:zinc ion binding"/>
    <property type="evidence" value="ECO:0007669"/>
    <property type="project" value="UniProtKB-KW"/>
</dbReference>
<dbReference type="GO" id="GO:0043161">
    <property type="term" value="P:proteasome-mediated ubiquitin-dependent protein catabolic process"/>
    <property type="evidence" value="ECO:0000318"/>
    <property type="project" value="GO_Central"/>
</dbReference>
<dbReference type="GO" id="GO:0006511">
    <property type="term" value="P:ubiquitin-dependent protein catabolic process"/>
    <property type="evidence" value="ECO:0000314"/>
    <property type="project" value="SGD"/>
</dbReference>
<dbReference type="CDD" id="cd16568">
    <property type="entry name" value="RING-HC_ScPSH1-like"/>
    <property type="match status" value="1"/>
</dbReference>
<dbReference type="Gene3D" id="3.30.40.10">
    <property type="entry name" value="Zinc/RING finger domain, C3HC4 (zinc finger)"/>
    <property type="match status" value="1"/>
</dbReference>
<dbReference type="InterPro" id="IPR051051">
    <property type="entry name" value="E3_ubiq-ligase_TRIM/RNF"/>
</dbReference>
<dbReference type="InterPro" id="IPR027370">
    <property type="entry name" value="Znf-RING_euk"/>
</dbReference>
<dbReference type="InterPro" id="IPR001841">
    <property type="entry name" value="Znf_RING"/>
</dbReference>
<dbReference type="InterPro" id="IPR013083">
    <property type="entry name" value="Znf_RING/FYVE/PHD"/>
</dbReference>
<dbReference type="InterPro" id="IPR017907">
    <property type="entry name" value="Znf_RING_CS"/>
</dbReference>
<dbReference type="PANTHER" id="PTHR25465">
    <property type="entry name" value="B-BOX DOMAIN CONTAINING"/>
    <property type="match status" value="1"/>
</dbReference>
<dbReference type="Pfam" id="PF13445">
    <property type="entry name" value="zf-RING_UBOX"/>
    <property type="match status" value="1"/>
</dbReference>
<dbReference type="SMART" id="SM00184">
    <property type="entry name" value="RING"/>
    <property type="match status" value="1"/>
</dbReference>
<dbReference type="SUPFAM" id="SSF57850">
    <property type="entry name" value="RING/U-box"/>
    <property type="match status" value="1"/>
</dbReference>
<dbReference type="PROSITE" id="PS00518">
    <property type="entry name" value="ZF_RING_1"/>
    <property type="match status" value="1"/>
</dbReference>
<dbReference type="PROSITE" id="PS50089">
    <property type="entry name" value="ZF_RING_2"/>
    <property type="match status" value="1"/>
</dbReference>
<proteinExistence type="evidence at protein level"/>